<evidence type="ECO:0000255" key="1">
    <source>
        <dbReference type="HAMAP-Rule" id="MF_01338"/>
    </source>
</evidence>
<accession>A5EF40</accession>
<protein>
    <recommendedName>
        <fullName evidence="1">Ribulose bisphosphate carboxylase large chain 2</fullName>
        <shortName evidence="1">RuBisCO large subunit 2</shortName>
        <ecNumber evidence="1">4.1.1.39</ecNumber>
    </recommendedName>
</protein>
<feature type="chain" id="PRO_0000299959" description="Ribulose bisphosphate carboxylase large chain 2">
    <location>
        <begin position="1"/>
        <end position="479"/>
    </location>
</feature>
<feature type="active site" description="Proton acceptor" evidence="1">
    <location>
        <position position="168"/>
    </location>
</feature>
<feature type="active site" description="Proton acceptor" evidence="1">
    <location>
        <position position="287"/>
    </location>
</feature>
<feature type="binding site" description="in homodimeric partner" evidence="1">
    <location>
        <position position="116"/>
    </location>
    <ligand>
        <name>substrate</name>
    </ligand>
</feature>
<feature type="binding site" evidence="1">
    <location>
        <position position="166"/>
    </location>
    <ligand>
        <name>substrate</name>
    </ligand>
</feature>
<feature type="binding site" evidence="1">
    <location>
        <position position="170"/>
    </location>
    <ligand>
        <name>substrate</name>
    </ligand>
</feature>
<feature type="binding site" description="via carbamate group" evidence="1">
    <location>
        <position position="194"/>
    </location>
    <ligand>
        <name>Mg(2+)</name>
        <dbReference type="ChEBI" id="CHEBI:18420"/>
    </ligand>
</feature>
<feature type="binding site" evidence="1">
    <location>
        <position position="196"/>
    </location>
    <ligand>
        <name>Mg(2+)</name>
        <dbReference type="ChEBI" id="CHEBI:18420"/>
    </ligand>
</feature>
<feature type="binding site" evidence="1">
    <location>
        <position position="197"/>
    </location>
    <ligand>
        <name>Mg(2+)</name>
        <dbReference type="ChEBI" id="CHEBI:18420"/>
    </ligand>
</feature>
<feature type="binding site" evidence="1">
    <location>
        <position position="288"/>
    </location>
    <ligand>
        <name>substrate</name>
    </ligand>
</feature>
<feature type="binding site" evidence="1">
    <location>
        <position position="320"/>
    </location>
    <ligand>
        <name>substrate</name>
    </ligand>
</feature>
<feature type="binding site" evidence="1">
    <location>
        <position position="372"/>
    </location>
    <ligand>
        <name>substrate</name>
    </ligand>
</feature>
<feature type="site" description="Transition state stabilizer" evidence="1">
    <location>
        <position position="327"/>
    </location>
</feature>
<feature type="modified residue" description="N6-carboxylysine" evidence="1">
    <location>
        <position position="194"/>
    </location>
</feature>
<name>RBL1B_BRASB</name>
<gene>
    <name evidence="1" type="primary">cbbL2</name>
    <name type="ordered locus">BBta_2641</name>
</gene>
<sequence>MAEKSYQAGVKEYRKTYWTPDYVPLDTDLLAVFKIVAQAGVPREEAAAAVAAESSTGTWTTVWTDLLTDLDYYKGRAYRIEPVPGDDNAFYAFIAYPIDLFEEGSVVNVLTSLVGNVFGFKAVRSLRLEDIRFPLAYVKTCGGPPNGIQLERDRLNKYGRPLLGCTIKPKLGLSAKNYGRAVYECLRGGLDFTKDDENINSQPFMRWQHRFEFVMEAVHKATSETGERKGHYLNVTAPTPEEMYKRAEFAKSLGAPIIMHDFLTAGFTANTGLANWCRENGMLLHIHRAMHAVLDRNPMHGIHFRVLTKCLRLSGGDHLHSGTVVGKLEGDREATIGWVDLMREPFVPENRARGIFFDQDWGAMPGVMPVASGGIHVWHMPALTAIFGDDACFQFGGGTLGHPWGNAAGAHANRVALEACVEARNQGRPVEREGREILTEAAQHSPELKIAMETWKEIKFEFDVVDKLDTGPMLRVVNA</sequence>
<comment type="function">
    <text evidence="1">RuBisCO catalyzes two reactions: the carboxylation of D-ribulose 1,5-bisphosphate, the primary event in carbon dioxide fixation, as well as the oxidative fragmentation of the pentose substrate. Both reactions occur simultaneously and in competition at the same active site.</text>
</comment>
<comment type="catalytic activity">
    <reaction evidence="1">
        <text>2 (2R)-3-phosphoglycerate + 2 H(+) = D-ribulose 1,5-bisphosphate + CO2 + H2O</text>
        <dbReference type="Rhea" id="RHEA:23124"/>
        <dbReference type="ChEBI" id="CHEBI:15377"/>
        <dbReference type="ChEBI" id="CHEBI:15378"/>
        <dbReference type="ChEBI" id="CHEBI:16526"/>
        <dbReference type="ChEBI" id="CHEBI:57870"/>
        <dbReference type="ChEBI" id="CHEBI:58272"/>
        <dbReference type="EC" id="4.1.1.39"/>
    </reaction>
</comment>
<comment type="catalytic activity">
    <reaction evidence="1">
        <text>D-ribulose 1,5-bisphosphate + O2 = 2-phosphoglycolate + (2R)-3-phosphoglycerate + 2 H(+)</text>
        <dbReference type="Rhea" id="RHEA:36631"/>
        <dbReference type="ChEBI" id="CHEBI:15378"/>
        <dbReference type="ChEBI" id="CHEBI:15379"/>
        <dbReference type="ChEBI" id="CHEBI:57870"/>
        <dbReference type="ChEBI" id="CHEBI:58033"/>
        <dbReference type="ChEBI" id="CHEBI:58272"/>
    </reaction>
</comment>
<comment type="cofactor">
    <cofactor evidence="1">
        <name>Mg(2+)</name>
        <dbReference type="ChEBI" id="CHEBI:18420"/>
    </cofactor>
    <text evidence="1">Binds 1 Mg(2+) ion per subunit.</text>
</comment>
<comment type="subunit">
    <text evidence="1">Heterohexadecamer of 8 large chains and 8 small chains.</text>
</comment>
<comment type="miscellaneous">
    <text evidence="1">The basic functional RuBisCO is composed of a large chain homodimer in a 'head-to-tail' conformation. In form I RuBisCO this homodimer is arranged in a barrel-like tetramer with the small subunits forming a tetrameric 'cap' on each end of the 'barrel'.</text>
</comment>
<comment type="similarity">
    <text evidence="1">Belongs to the RuBisCO large chain family. Type I subfamily.</text>
</comment>
<dbReference type="EC" id="4.1.1.39" evidence="1"/>
<dbReference type="EMBL" id="CP000494">
    <property type="protein sequence ID" value="ABQ34784.1"/>
    <property type="molecule type" value="Genomic_DNA"/>
</dbReference>
<dbReference type="RefSeq" id="WP_012042812.1">
    <property type="nucleotide sequence ID" value="NC_009485.1"/>
</dbReference>
<dbReference type="SMR" id="A5EF40"/>
<dbReference type="STRING" id="288000.BBta_2641"/>
<dbReference type="KEGG" id="bbt:BBta_2641"/>
<dbReference type="eggNOG" id="COG1850">
    <property type="taxonomic scope" value="Bacteria"/>
</dbReference>
<dbReference type="HOGENOM" id="CLU_031450_2_0_5"/>
<dbReference type="OrthoDB" id="9764279at2"/>
<dbReference type="Proteomes" id="UP000000246">
    <property type="component" value="Chromosome"/>
</dbReference>
<dbReference type="GO" id="GO:0000287">
    <property type="term" value="F:magnesium ion binding"/>
    <property type="evidence" value="ECO:0007669"/>
    <property type="project" value="UniProtKB-UniRule"/>
</dbReference>
<dbReference type="GO" id="GO:0004497">
    <property type="term" value="F:monooxygenase activity"/>
    <property type="evidence" value="ECO:0007669"/>
    <property type="project" value="UniProtKB-KW"/>
</dbReference>
<dbReference type="GO" id="GO:0016984">
    <property type="term" value="F:ribulose-bisphosphate carboxylase activity"/>
    <property type="evidence" value="ECO:0007669"/>
    <property type="project" value="UniProtKB-UniRule"/>
</dbReference>
<dbReference type="GO" id="GO:0019253">
    <property type="term" value="P:reductive pentose-phosphate cycle"/>
    <property type="evidence" value="ECO:0007669"/>
    <property type="project" value="UniProtKB-UniRule"/>
</dbReference>
<dbReference type="Gene3D" id="3.20.20.110">
    <property type="entry name" value="Ribulose bisphosphate carboxylase, large subunit, C-terminal domain"/>
    <property type="match status" value="1"/>
</dbReference>
<dbReference type="Gene3D" id="3.30.70.150">
    <property type="entry name" value="RuBisCO large subunit, N-terminal domain"/>
    <property type="match status" value="1"/>
</dbReference>
<dbReference type="HAMAP" id="MF_01338">
    <property type="entry name" value="RuBisCO_L_type1"/>
    <property type="match status" value="1"/>
</dbReference>
<dbReference type="InterPro" id="IPR033966">
    <property type="entry name" value="RuBisCO"/>
</dbReference>
<dbReference type="InterPro" id="IPR020878">
    <property type="entry name" value="RuBisCo_large_chain_AS"/>
</dbReference>
<dbReference type="InterPro" id="IPR000685">
    <property type="entry name" value="RuBisCO_lsu_C"/>
</dbReference>
<dbReference type="InterPro" id="IPR036376">
    <property type="entry name" value="RuBisCO_lsu_C_sf"/>
</dbReference>
<dbReference type="InterPro" id="IPR017443">
    <property type="entry name" value="RuBisCO_lsu_fd_N"/>
</dbReference>
<dbReference type="InterPro" id="IPR036422">
    <property type="entry name" value="RuBisCO_lsu_N_sf"/>
</dbReference>
<dbReference type="InterPro" id="IPR020888">
    <property type="entry name" value="RuBisCO_lsuI"/>
</dbReference>
<dbReference type="NCBIfam" id="NF003252">
    <property type="entry name" value="PRK04208.1"/>
    <property type="match status" value="1"/>
</dbReference>
<dbReference type="PANTHER" id="PTHR42704">
    <property type="entry name" value="RIBULOSE BISPHOSPHATE CARBOXYLASE"/>
    <property type="match status" value="1"/>
</dbReference>
<dbReference type="PANTHER" id="PTHR42704:SF17">
    <property type="entry name" value="RIBULOSE BISPHOSPHATE CARBOXYLASE LARGE CHAIN"/>
    <property type="match status" value="1"/>
</dbReference>
<dbReference type="Pfam" id="PF00016">
    <property type="entry name" value="RuBisCO_large"/>
    <property type="match status" value="1"/>
</dbReference>
<dbReference type="Pfam" id="PF02788">
    <property type="entry name" value="RuBisCO_large_N"/>
    <property type="match status" value="1"/>
</dbReference>
<dbReference type="SFLD" id="SFLDG01052">
    <property type="entry name" value="RuBisCO"/>
    <property type="match status" value="1"/>
</dbReference>
<dbReference type="SFLD" id="SFLDS00014">
    <property type="entry name" value="RuBisCO"/>
    <property type="match status" value="1"/>
</dbReference>
<dbReference type="SFLD" id="SFLDG00301">
    <property type="entry name" value="RuBisCO-like_proteins"/>
    <property type="match status" value="1"/>
</dbReference>
<dbReference type="SUPFAM" id="SSF51649">
    <property type="entry name" value="RuBisCo, C-terminal domain"/>
    <property type="match status" value="1"/>
</dbReference>
<dbReference type="SUPFAM" id="SSF54966">
    <property type="entry name" value="RuBisCO, large subunit, small (N-terminal) domain"/>
    <property type="match status" value="1"/>
</dbReference>
<dbReference type="PROSITE" id="PS00157">
    <property type="entry name" value="RUBISCO_LARGE"/>
    <property type="match status" value="1"/>
</dbReference>
<organism>
    <name type="scientific">Bradyrhizobium sp. (strain BTAi1 / ATCC BAA-1182)</name>
    <dbReference type="NCBI Taxonomy" id="288000"/>
    <lineage>
        <taxon>Bacteria</taxon>
        <taxon>Pseudomonadati</taxon>
        <taxon>Pseudomonadota</taxon>
        <taxon>Alphaproteobacteria</taxon>
        <taxon>Hyphomicrobiales</taxon>
        <taxon>Nitrobacteraceae</taxon>
        <taxon>Bradyrhizobium</taxon>
    </lineage>
</organism>
<proteinExistence type="inferred from homology"/>
<keyword id="KW-0113">Calvin cycle</keyword>
<keyword id="KW-0120">Carbon dioxide fixation</keyword>
<keyword id="KW-0456">Lyase</keyword>
<keyword id="KW-0460">Magnesium</keyword>
<keyword id="KW-0479">Metal-binding</keyword>
<keyword id="KW-0503">Monooxygenase</keyword>
<keyword id="KW-0560">Oxidoreductase</keyword>
<keyword id="KW-0602">Photosynthesis</keyword>
<keyword id="KW-1185">Reference proteome</keyword>
<reference key="1">
    <citation type="journal article" date="2007" name="Science">
        <title>Legumes symbioses: absence of nod genes in photosynthetic bradyrhizobia.</title>
        <authorList>
            <person name="Giraud E."/>
            <person name="Moulin L."/>
            <person name="Vallenet D."/>
            <person name="Barbe V."/>
            <person name="Cytryn E."/>
            <person name="Avarre J.-C."/>
            <person name="Jaubert M."/>
            <person name="Simon D."/>
            <person name="Cartieaux F."/>
            <person name="Prin Y."/>
            <person name="Bena G."/>
            <person name="Hannibal L."/>
            <person name="Fardoux J."/>
            <person name="Kojadinovic M."/>
            <person name="Vuillet L."/>
            <person name="Lajus A."/>
            <person name="Cruveiller S."/>
            <person name="Rouy Z."/>
            <person name="Mangenot S."/>
            <person name="Segurens B."/>
            <person name="Dossat C."/>
            <person name="Franck W.L."/>
            <person name="Chang W.-S."/>
            <person name="Saunders E."/>
            <person name="Bruce D."/>
            <person name="Richardson P."/>
            <person name="Normand P."/>
            <person name="Dreyfus B."/>
            <person name="Pignol D."/>
            <person name="Stacey G."/>
            <person name="Emerich D."/>
            <person name="Vermeglio A."/>
            <person name="Medigue C."/>
            <person name="Sadowsky M."/>
        </authorList>
    </citation>
    <scope>NUCLEOTIDE SEQUENCE [LARGE SCALE GENOMIC DNA]</scope>
    <source>
        <strain>BTAi1 / ATCC BAA-1182</strain>
    </source>
</reference>